<evidence type="ECO:0000255" key="1">
    <source>
        <dbReference type="HAMAP-Rule" id="MF_04065"/>
    </source>
</evidence>
<evidence type="ECO:0000256" key="2">
    <source>
        <dbReference type="SAM" id="MobiDB-lite"/>
    </source>
</evidence>
<dbReference type="EC" id="2.7.7.48" evidence="1"/>
<dbReference type="EMBL" id="M25926">
    <property type="protein sequence ID" value="AAA43635.1"/>
    <property type="molecule type" value="Genomic_RNA"/>
</dbReference>
<dbReference type="SMR" id="P16508"/>
<dbReference type="Proteomes" id="UP000098172">
    <property type="component" value="Genome"/>
</dbReference>
<dbReference type="GO" id="GO:0030430">
    <property type="term" value="C:host cell cytoplasm"/>
    <property type="evidence" value="ECO:0007669"/>
    <property type="project" value="UniProtKB-SubCell"/>
</dbReference>
<dbReference type="GO" id="GO:0042025">
    <property type="term" value="C:host cell nucleus"/>
    <property type="evidence" value="ECO:0007669"/>
    <property type="project" value="UniProtKB-SubCell"/>
</dbReference>
<dbReference type="GO" id="GO:0000166">
    <property type="term" value="F:nucleotide binding"/>
    <property type="evidence" value="ECO:0007669"/>
    <property type="project" value="UniProtKB-UniRule"/>
</dbReference>
<dbReference type="GO" id="GO:0003723">
    <property type="term" value="F:RNA binding"/>
    <property type="evidence" value="ECO:0007669"/>
    <property type="project" value="InterPro"/>
</dbReference>
<dbReference type="GO" id="GO:0003968">
    <property type="term" value="F:RNA-directed RNA polymerase activity"/>
    <property type="evidence" value="ECO:0007669"/>
    <property type="project" value="UniProtKB-UniRule"/>
</dbReference>
<dbReference type="GO" id="GO:0006351">
    <property type="term" value="P:DNA-templated transcription"/>
    <property type="evidence" value="ECO:0007669"/>
    <property type="project" value="UniProtKB-UniRule"/>
</dbReference>
<dbReference type="GO" id="GO:0039657">
    <property type="term" value="P:symbiont-mediated suppression of host gene expression"/>
    <property type="evidence" value="ECO:0007669"/>
    <property type="project" value="UniProtKB-KW"/>
</dbReference>
<dbReference type="GO" id="GO:0039523">
    <property type="term" value="P:symbiont-mediated suppression of host mRNA transcription via inhibition of RNA polymerase II activity"/>
    <property type="evidence" value="ECO:0007669"/>
    <property type="project" value="UniProtKB-UniRule"/>
</dbReference>
<dbReference type="GO" id="GO:0039694">
    <property type="term" value="P:viral RNA genome replication"/>
    <property type="evidence" value="ECO:0007669"/>
    <property type="project" value="UniProtKB-UniRule"/>
</dbReference>
<dbReference type="GO" id="GO:0019083">
    <property type="term" value="P:viral transcription"/>
    <property type="evidence" value="ECO:0007669"/>
    <property type="project" value="UniProtKB-KW"/>
</dbReference>
<dbReference type="Gene3D" id="6.10.140.720">
    <property type="match status" value="1"/>
</dbReference>
<dbReference type="HAMAP" id="MF_04065">
    <property type="entry name" value="INFV_RDRP"/>
    <property type="match status" value="1"/>
</dbReference>
<dbReference type="InterPro" id="IPR007099">
    <property type="entry name" value="RNA-dir_pol_NSvirus"/>
</dbReference>
<dbReference type="InterPro" id="IPR001407">
    <property type="entry name" value="RNA_pol_PB1_influenza"/>
</dbReference>
<dbReference type="Pfam" id="PF00602">
    <property type="entry name" value="Flu_PB1"/>
    <property type="match status" value="1"/>
</dbReference>
<dbReference type="PIRSF" id="PIRSF000827">
    <property type="entry name" value="RdRPol_OMV"/>
    <property type="match status" value="1"/>
</dbReference>
<dbReference type="PROSITE" id="PS50525">
    <property type="entry name" value="RDRP_SSRNA_NEG_SEG"/>
    <property type="match status" value="1"/>
</dbReference>
<name>RDRP_I78A3</name>
<organismHost>
    <name type="scientific">Aves</name>
    <dbReference type="NCBI Taxonomy" id="8782"/>
</organismHost>
<organismHost>
    <name type="scientific">Homo sapiens</name>
    <name type="common">Human</name>
    <dbReference type="NCBI Taxonomy" id="9606"/>
</organismHost>
<keyword id="KW-1262">Eukaryotic host gene expression shutoff by virus</keyword>
<keyword id="KW-1191">Eukaryotic host transcription shutoff by virus</keyword>
<keyword id="KW-1035">Host cytoplasm</keyword>
<keyword id="KW-1190">Host gene expression shutoff by virus</keyword>
<keyword id="KW-1048">Host nucleus</keyword>
<keyword id="KW-0945">Host-virus interaction</keyword>
<keyword id="KW-1104">Inhibition of host RNA polymerase II by virus</keyword>
<keyword id="KW-0547">Nucleotide-binding</keyword>
<keyword id="KW-0548">Nucleotidyltransferase</keyword>
<keyword id="KW-0597">Phosphoprotein</keyword>
<keyword id="KW-0696">RNA-directed RNA polymerase</keyword>
<keyword id="KW-0808">Transferase</keyword>
<keyword id="KW-0693">Viral RNA replication</keyword>
<keyword id="KW-1195">Viral transcription</keyword>
<accession>P16508</accession>
<comment type="function">
    <text evidence="1">RNA-dependent RNA polymerase which is responsible for replication and transcription of virus RNA segments. The transcription of viral mRNAs occurs by a unique mechanism called cap-snatching. 5' methylated caps of cellular mRNAs are cleaved after 10-13 nucleotides by PA. In turn, these short capped RNAs are used as primers by PB1 for transcription of viral mRNAs. During virus replication, PB1 initiates RNA synthesis and copy vRNA into complementary RNA (cRNA) which in turn serves as a template for the production of more vRNAs.</text>
</comment>
<comment type="catalytic activity">
    <reaction evidence="1">
        <text>RNA(n) + a ribonucleoside 5'-triphosphate = RNA(n+1) + diphosphate</text>
        <dbReference type="Rhea" id="RHEA:21248"/>
        <dbReference type="Rhea" id="RHEA-COMP:14527"/>
        <dbReference type="Rhea" id="RHEA-COMP:17342"/>
        <dbReference type="ChEBI" id="CHEBI:33019"/>
        <dbReference type="ChEBI" id="CHEBI:61557"/>
        <dbReference type="ChEBI" id="CHEBI:140395"/>
        <dbReference type="EC" id="2.7.7.48"/>
    </reaction>
</comment>
<comment type="subunit">
    <text evidence="1">Influenza RNA polymerase is composed of three subunits: PB1, PB2 and PA. Interacts (via N-terminus) with PA (via C-terminus). Interacts (via C-terminus) with PB2 (via N-terminus); this interaction is essential for transcription initiation.</text>
</comment>
<comment type="subcellular location">
    <subcellularLocation>
        <location evidence="1">Host nucleus</location>
    </subcellularLocation>
    <subcellularLocation>
        <location evidence="1">Host cytoplasm</location>
    </subcellularLocation>
</comment>
<comment type="PTM">
    <text evidence="1">Phosphorylated by host PRKCA.</text>
</comment>
<comment type="similarity">
    <text evidence="1">Belongs to the influenza viruses polymerase PB1 family.</text>
</comment>
<organism>
    <name type="scientific">Influenza A virus (strain A/Mallard/New York/6750/1978 H2N2)</name>
    <dbReference type="NCBI Taxonomy" id="384502"/>
    <lineage>
        <taxon>Viruses</taxon>
        <taxon>Riboviria</taxon>
        <taxon>Orthornavirae</taxon>
        <taxon>Negarnaviricota</taxon>
        <taxon>Polyploviricotina</taxon>
        <taxon>Insthoviricetes</taxon>
        <taxon>Articulavirales</taxon>
        <taxon>Orthomyxoviridae</taxon>
        <taxon>Alphainfluenzavirus</taxon>
        <taxon>Alphainfluenzavirus influenzae</taxon>
        <taxon>Influenza A virus</taxon>
    </lineage>
</organism>
<protein>
    <recommendedName>
        <fullName evidence="1">RNA-directed RNA polymerase catalytic subunit</fullName>
        <ecNumber evidence="1">2.7.7.48</ecNumber>
    </recommendedName>
    <alternativeName>
        <fullName evidence="1">Polymerase basic protein 1</fullName>
        <shortName evidence="1">PB1</shortName>
    </alternativeName>
    <alternativeName>
        <fullName evidence="1">RNA-directed RNA polymerase subunit P1</fullName>
    </alternativeName>
</protein>
<reference key="1">
    <citation type="journal article" date="1989" name="J. Virol.">
        <title>Avian-to-human transmission of the PB1 gene of influenza A viruses in the 1957 and 1968 pandemics.</title>
        <authorList>
            <person name="Kawaoka Y."/>
            <person name="Krauss S."/>
            <person name="Webster R.G."/>
        </authorList>
    </citation>
    <scope>NUCLEOTIDE SEQUENCE [GENOMIC RNA]</scope>
</reference>
<reference key="2">
    <citation type="journal article" date="1989" name="Virus Res.">
        <title>Nucleotide sequence of the avian influenza A/Mallard/NY/6750/78 virus polymerase genes.</title>
        <authorList>
            <person name="Treanor J."/>
            <person name="Kawaoka Y."/>
            <person name="Miller R."/>
            <person name="Webster R.G."/>
            <person name="Murphy B."/>
        </authorList>
    </citation>
    <scope>NUCLEOTIDE SEQUENCE [GENOMIC RNA]</scope>
</reference>
<proteinExistence type="inferred from homology"/>
<feature type="chain" id="PRO_0000078760" description="RNA-directed RNA polymerase catalytic subunit">
    <location>
        <begin position="1"/>
        <end position="757"/>
    </location>
</feature>
<feature type="domain" description="RdRp catalytic" evidence="1">
    <location>
        <begin position="286"/>
        <end position="483"/>
    </location>
</feature>
<feature type="region of interest" description="Disordered" evidence="2">
    <location>
        <begin position="50"/>
        <end position="82"/>
    </location>
</feature>
<feature type="region of interest" description="Promoter-binding site" evidence="1">
    <location>
        <begin position="249"/>
        <end position="256"/>
    </location>
</feature>
<feature type="short sequence motif" description="Nuclear localization signal" evidence="1">
    <location>
        <begin position="187"/>
        <end position="195"/>
    </location>
</feature>
<feature type="short sequence motif" description="Nuclear localization signal" evidence="1">
    <location>
        <begin position="203"/>
        <end position="216"/>
    </location>
</feature>
<feature type="compositionally biased region" description="Polar residues" evidence="2">
    <location>
        <begin position="55"/>
        <end position="64"/>
    </location>
</feature>
<sequence length="757" mass="86454">MDVNPTLLFLKVPAQNAISTTFPYTGDPPYSHGTGTGYTMDTVNRTHQYSEKGKWTTNTETGAPQLNPIDGPLPEDNEPSGYAQTDCVLEAMAFLEESHPGIFENSCLETMEVVQQTRVDKLTQGRQTYDWTLNRNQPAATALANTIEVFRSNGLTANESGRLIDFLKDVMESMDKEEMEITTHFQRKRRVRDNMTKKMVTQRTIGKKKQRLNKRSYLIRALTLNTMTKDAERGKLKRRAIATPGMQIRGFVYFVETLARSICEKLEQSGLPVGGNEKKAKLANVVRKMMTNSQDTELSFTITGDNTKWNENQNPRMFLAMITYITRNQPEWFRNVLSIAPIMFSNKMARLGKGYMFESKSMKLRTQIPAEMLADIDLKYFNESTRKKIEKIRPLLIDGTASLSPGMMMGMFNMLSTVLGVSILNLGQKRYTKTTYWWDGLQSSDDFALIVNAPNHEGIQAGVDRFYRTCKLVGINMSKKKSYINRTGTFEFTSFFYRYGFVANFSMELPSFGVSGINESADMSIGVTVIKNNMINNDLGPATAQMALQLFIKDYRYTYRCHRGDTQIQTRRSFELKKLWEQTRSKAGLLVSDGGPNLYNIRNLHIPEVCLKWELMDEDYQGRLCNPLNPFVSHKEIESVNNAVVMPAHGPAKSMEYDAVATTHSWIPKRNRSILNTSQRGILEDEQMYQKCCNLFEKFFPSSSYRRPVGISSMVEAMVSRARIDARIDFESGRIKKEEFAEIMKICSTIEELRRQK</sequence>
<gene>
    <name evidence="1" type="primary">PB1</name>
</gene>